<geneLocation type="chloroplast"/>
<accession>Q1XDR3</accession>
<reference key="1">
    <citation type="submission" date="2003-11" db="EMBL/GenBank/DDBJ databases">
        <title>Whole genome sequence of Porphyra yezoensis chloroplast.</title>
        <authorList>
            <person name="Kunimoto M."/>
            <person name="Morishima K."/>
            <person name="Yoshikawa M."/>
            <person name="Fukuda S."/>
            <person name="Kobayashi T."/>
            <person name="Kobayashi M."/>
            <person name="Okazaki T."/>
            <person name="Ohara I."/>
            <person name="Nakayama I."/>
        </authorList>
    </citation>
    <scope>NUCLEOTIDE SEQUENCE [LARGE SCALE GENOMIC DNA]</scope>
    <source>
        <strain>U-51</strain>
    </source>
</reference>
<sequence>MSKKCQLTGKVANNGYAVSHSHKRTKKLQKVNLQHKKVWSSGQNKWVKMLISTKAIKTLTQTL</sequence>
<dbReference type="EMBL" id="AP006715">
    <property type="protein sequence ID" value="BAE92348.1"/>
    <property type="molecule type" value="Genomic_DNA"/>
</dbReference>
<dbReference type="RefSeq" id="YP_536905.1">
    <property type="nucleotide sequence ID" value="NC_007932.1"/>
</dbReference>
<dbReference type="SMR" id="Q1XDR3"/>
<dbReference type="GeneID" id="3978916"/>
<dbReference type="GO" id="GO:0009507">
    <property type="term" value="C:chloroplast"/>
    <property type="evidence" value="ECO:0007669"/>
    <property type="project" value="UniProtKB-SubCell"/>
</dbReference>
<dbReference type="GO" id="GO:1990904">
    <property type="term" value="C:ribonucleoprotein complex"/>
    <property type="evidence" value="ECO:0007669"/>
    <property type="project" value="UniProtKB-KW"/>
</dbReference>
<dbReference type="GO" id="GO:0005840">
    <property type="term" value="C:ribosome"/>
    <property type="evidence" value="ECO:0007669"/>
    <property type="project" value="UniProtKB-KW"/>
</dbReference>
<dbReference type="GO" id="GO:0003735">
    <property type="term" value="F:structural constituent of ribosome"/>
    <property type="evidence" value="ECO:0007669"/>
    <property type="project" value="InterPro"/>
</dbReference>
<dbReference type="GO" id="GO:0006412">
    <property type="term" value="P:translation"/>
    <property type="evidence" value="ECO:0007669"/>
    <property type="project" value="UniProtKB-UniRule"/>
</dbReference>
<dbReference type="Gene3D" id="2.30.170.40">
    <property type="entry name" value="Ribosomal protein L28/L24"/>
    <property type="match status" value="1"/>
</dbReference>
<dbReference type="HAMAP" id="MF_00373">
    <property type="entry name" value="Ribosomal_bL28"/>
    <property type="match status" value="1"/>
</dbReference>
<dbReference type="InterPro" id="IPR050096">
    <property type="entry name" value="Bacterial_rp_bL28"/>
</dbReference>
<dbReference type="InterPro" id="IPR026569">
    <property type="entry name" value="Ribosomal_bL28"/>
</dbReference>
<dbReference type="InterPro" id="IPR034704">
    <property type="entry name" value="Ribosomal_bL28/bL31-like_sf"/>
</dbReference>
<dbReference type="InterPro" id="IPR001383">
    <property type="entry name" value="Ribosomal_bL28_bact-type"/>
</dbReference>
<dbReference type="InterPro" id="IPR037147">
    <property type="entry name" value="Ribosomal_bL28_sf"/>
</dbReference>
<dbReference type="NCBIfam" id="TIGR00009">
    <property type="entry name" value="L28"/>
    <property type="match status" value="1"/>
</dbReference>
<dbReference type="PANTHER" id="PTHR39080">
    <property type="entry name" value="50S RIBOSOMAL PROTEIN L28"/>
    <property type="match status" value="1"/>
</dbReference>
<dbReference type="PANTHER" id="PTHR39080:SF1">
    <property type="entry name" value="LARGE RIBOSOMAL SUBUNIT PROTEIN BL28A"/>
    <property type="match status" value="1"/>
</dbReference>
<dbReference type="Pfam" id="PF00830">
    <property type="entry name" value="Ribosomal_L28"/>
    <property type="match status" value="1"/>
</dbReference>
<dbReference type="SUPFAM" id="SSF143800">
    <property type="entry name" value="L28p-like"/>
    <property type="match status" value="1"/>
</dbReference>
<keyword id="KW-0150">Chloroplast</keyword>
<keyword id="KW-0934">Plastid</keyword>
<keyword id="KW-0687">Ribonucleoprotein</keyword>
<keyword id="KW-0689">Ribosomal protein</keyword>
<organism>
    <name type="scientific">Pyropia yezoensis</name>
    <name type="common">Susabi-nori</name>
    <name type="synonym">Porphyra yezoensis</name>
    <dbReference type="NCBI Taxonomy" id="2788"/>
    <lineage>
        <taxon>Eukaryota</taxon>
        <taxon>Rhodophyta</taxon>
        <taxon>Bangiophyceae</taxon>
        <taxon>Bangiales</taxon>
        <taxon>Bangiaceae</taxon>
        <taxon>Pyropia</taxon>
    </lineage>
</organism>
<proteinExistence type="inferred from homology"/>
<evidence type="ECO:0000255" key="1">
    <source>
        <dbReference type="HAMAP-Rule" id="MF_00373"/>
    </source>
</evidence>
<evidence type="ECO:0000305" key="2"/>
<name>RK28_PYRYE</name>
<gene>
    <name evidence="1" type="primary">rpl28</name>
</gene>
<comment type="subcellular location">
    <subcellularLocation>
        <location>Plastid</location>
        <location>Chloroplast</location>
    </subcellularLocation>
</comment>
<comment type="similarity">
    <text evidence="1">Belongs to the bacterial ribosomal protein bL28 family.</text>
</comment>
<protein>
    <recommendedName>
        <fullName evidence="1">Large ribosomal subunit protein bL28c</fullName>
    </recommendedName>
    <alternativeName>
        <fullName evidence="2">50S ribosomal protein L28, chloroplastic</fullName>
    </alternativeName>
</protein>
<feature type="chain" id="PRO_0000276458" description="Large ribosomal subunit protein bL28c">
    <location>
        <begin position="1"/>
        <end position="63"/>
    </location>
</feature>